<gene>
    <name evidence="1" type="primary">pgi</name>
    <name type="ordered locus">Pnap_0655</name>
</gene>
<name>G6PI_POLNA</name>
<protein>
    <recommendedName>
        <fullName evidence="1">Glucose-6-phosphate isomerase</fullName>
        <shortName evidence="1">GPI</shortName>
        <ecNumber evidence="1">5.3.1.9</ecNumber>
    </recommendedName>
    <alternativeName>
        <fullName evidence="1">Phosphoglucose isomerase</fullName>
        <shortName evidence="1">PGI</shortName>
    </alternativeName>
    <alternativeName>
        <fullName evidence="1">Phosphohexose isomerase</fullName>
        <shortName evidence="1">PHI</shortName>
    </alternativeName>
</protein>
<keyword id="KW-0963">Cytoplasm</keyword>
<keyword id="KW-0312">Gluconeogenesis</keyword>
<keyword id="KW-0324">Glycolysis</keyword>
<keyword id="KW-0413">Isomerase</keyword>
<keyword id="KW-1185">Reference proteome</keyword>
<feature type="chain" id="PRO_1000013996" description="Glucose-6-phosphate isomerase">
    <location>
        <begin position="1"/>
        <end position="521"/>
    </location>
</feature>
<feature type="active site" description="Proton donor" evidence="1">
    <location>
        <position position="351"/>
    </location>
</feature>
<feature type="active site" evidence="1">
    <location>
        <position position="382"/>
    </location>
</feature>
<feature type="active site" evidence="1">
    <location>
        <position position="491"/>
    </location>
</feature>
<proteinExistence type="inferred from homology"/>
<evidence type="ECO:0000255" key="1">
    <source>
        <dbReference type="HAMAP-Rule" id="MF_00473"/>
    </source>
</evidence>
<accession>A1VJZ6</accession>
<sequence>MKKLRCDQTPAWAALNTHFNASGRHFDVREAFARDARRFEAFSQDAPHVFADLSKNLIDADSQALLLALARQCGLEQQRDAMFAGELINSTEQRAVMHFLLRNPPSAQYTPAQAAINKIADAQAEVEVTLNAMLAYAEQVRADAAITDIVNIGIGGSDLGPQMAVLALNEFATAGKRLHFVSNIDGDELAGVLGLVKPENTLFLVASKTFTTTETMTNARSAKAWFEARGGQDIARHFAALTTNVAAANEFGITTTFGFWDWVGGRYSLWSAIGLPLAIAIGAAGFREFLAGAHAMDEHFRTAALEDNLPVRLGLLDVWYRNFHGFSSRSIAPYSSALRRWPAYLQQLEMESNGKRVDKDGQPLPFDTSPVLWGEPGTNGQHAYFQMLHQGTAVVPVEFVAVKRAAHGLPGHHDKLLANVLAQAQALMRGKKDAGGHQDFPGNRPSTFLLLEQLTPASLGALIALQEHRVFVSGAIWGINSFDQWGVELGKVLARDIEPRLQSGDISGLDGSTAGLLQRLR</sequence>
<organism>
    <name type="scientific">Polaromonas naphthalenivorans (strain CJ2)</name>
    <dbReference type="NCBI Taxonomy" id="365044"/>
    <lineage>
        <taxon>Bacteria</taxon>
        <taxon>Pseudomonadati</taxon>
        <taxon>Pseudomonadota</taxon>
        <taxon>Betaproteobacteria</taxon>
        <taxon>Burkholderiales</taxon>
        <taxon>Comamonadaceae</taxon>
        <taxon>Polaromonas</taxon>
    </lineage>
</organism>
<comment type="function">
    <text evidence="1">Catalyzes the reversible isomerization of glucose-6-phosphate to fructose-6-phosphate.</text>
</comment>
<comment type="catalytic activity">
    <reaction evidence="1">
        <text>alpha-D-glucose 6-phosphate = beta-D-fructose 6-phosphate</text>
        <dbReference type="Rhea" id="RHEA:11816"/>
        <dbReference type="ChEBI" id="CHEBI:57634"/>
        <dbReference type="ChEBI" id="CHEBI:58225"/>
        <dbReference type="EC" id="5.3.1.9"/>
    </reaction>
</comment>
<comment type="pathway">
    <text evidence="1">Carbohydrate biosynthesis; gluconeogenesis.</text>
</comment>
<comment type="pathway">
    <text evidence="1">Carbohydrate degradation; glycolysis; D-glyceraldehyde 3-phosphate and glycerone phosphate from D-glucose: step 2/4.</text>
</comment>
<comment type="subcellular location">
    <subcellularLocation>
        <location evidence="1">Cytoplasm</location>
    </subcellularLocation>
</comment>
<comment type="similarity">
    <text evidence="1">Belongs to the GPI family.</text>
</comment>
<reference key="1">
    <citation type="journal article" date="2009" name="Environ. Microbiol.">
        <title>The genome of Polaromonas naphthalenivorans strain CJ2, isolated from coal tar-contaminated sediment, reveals physiological and metabolic versatility and evolution through extensive horizontal gene transfer.</title>
        <authorList>
            <person name="Yagi J.M."/>
            <person name="Sims D."/>
            <person name="Brettin T."/>
            <person name="Bruce D."/>
            <person name="Madsen E.L."/>
        </authorList>
    </citation>
    <scope>NUCLEOTIDE SEQUENCE [LARGE SCALE GENOMIC DNA]</scope>
    <source>
        <strain>CJ2</strain>
    </source>
</reference>
<dbReference type="EC" id="5.3.1.9" evidence="1"/>
<dbReference type="EMBL" id="CP000529">
    <property type="protein sequence ID" value="ABM35974.1"/>
    <property type="molecule type" value="Genomic_DNA"/>
</dbReference>
<dbReference type="RefSeq" id="WP_011800069.1">
    <property type="nucleotide sequence ID" value="NC_008781.1"/>
</dbReference>
<dbReference type="SMR" id="A1VJZ6"/>
<dbReference type="STRING" id="365044.Pnap_0655"/>
<dbReference type="KEGG" id="pna:Pnap_0655"/>
<dbReference type="eggNOG" id="COG0166">
    <property type="taxonomic scope" value="Bacteria"/>
</dbReference>
<dbReference type="HOGENOM" id="CLU_017947_3_1_4"/>
<dbReference type="OrthoDB" id="140919at2"/>
<dbReference type="UniPathway" id="UPA00109">
    <property type="reaction ID" value="UER00181"/>
</dbReference>
<dbReference type="UniPathway" id="UPA00138"/>
<dbReference type="Proteomes" id="UP000000644">
    <property type="component" value="Chromosome"/>
</dbReference>
<dbReference type="GO" id="GO:0005829">
    <property type="term" value="C:cytosol"/>
    <property type="evidence" value="ECO:0007669"/>
    <property type="project" value="TreeGrafter"/>
</dbReference>
<dbReference type="GO" id="GO:0097367">
    <property type="term" value="F:carbohydrate derivative binding"/>
    <property type="evidence" value="ECO:0007669"/>
    <property type="project" value="InterPro"/>
</dbReference>
<dbReference type="GO" id="GO:0004347">
    <property type="term" value="F:glucose-6-phosphate isomerase activity"/>
    <property type="evidence" value="ECO:0007669"/>
    <property type="project" value="UniProtKB-UniRule"/>
</dbReference>
<dbReference type="GO" id="GO:0048029">
    <property type="term" value="F:monosaccharide binding"/>
    <property type="evidence" value="ECO:0007669"/>
    <property type="project" value="TreeGrafter"/>
</dbReference>
<dbReference type="GO" id="GO:0006094">
    <property type="term" value="P:gluconeogenesis"/>
    <property type="evidence" value="ECO:0007669"/>
    <property type="project" value="UniProtKB-UniRule"/>
</dbReference>
<dbReference type="GO" id="GO:0051156">
    <property type="term" value="P:glucose 6-phosphate metabolic process"/>
    <property type="evidence" value="ECO:0007669"/>
    <property type="project" value="TreeGrafter"/>
</dbReference>
<dbReference type="GO" id="GO:0006096">
    <property type="term" value="P:glycolytic process"/>
    <property type="evidence" value="ECO:0007669"/>
    <property type="project" value="UniProtKB-UniRule"/>
</dbReference>
<dbReference type="CDD" id="cd05015">
    <property type="entry name" value="SIS_PGI_1"/>
    <property type="match status" value="1"/>
</dbReference>
<dbReference type="CDD" id="cd05016">
    <property type="entry name" value="SIS_PGI_2"/>
    <property type="match status" value="1"/>
</dbReference>
<dbReference type="Gene3D" id="1.10.1390.10">
    <property type="match status" value="1"/>
</dbReference>
<dbReference type="Gene3D" id="3.40.50.10490">
    <property type="entry name" value="Glucose-6-phosphate isomerase like protein, domain 1"/>
    <property type="match status" value="2"/>
</dbReference>
<dbReference type="HAMAP" id="MF_00473">
    <property type="entry name" value="G6P_isomerase"/>
    <property type="match status" value="1"/>
</dbReference>
<dbReference type="InterPro" id="IPR001672">
    <property type="entry name" value="G6P_Isomerase"/>
</dbReference>
<dbReference type="InterPro" id="IPR023096">
    <property type="entry name" value="G6P_Isomerase_C"/>
</dbReference>
<dbReference type="InterPro" id="IPR018189">
    <property type="entry name" value="Phosphoglucose_isomerase_CS"/>
</dbReference>
<dbReference type="InterPro" id="IPR046348">
    <property type="entry name" value="SIS_dom_sf"/>
</dbReference>
<dbReference type="InterPro" id="IPR035476">
    <property type="entry name" value="SIS_PGI_1"/>
</dbReference>
<dbReference type="InterPro" id="IPR035482">
    <property type="entry name" value="SIS_PGI_2"/>
</dbReference>
<dbReference type="NCBIfam" id="NF001211">
    <property type="entry name" value="PRK00179.1"/>
    <property type="match status" value="1"/>
</dbReference>
<dbReference type="PANTHER" id="PTHR11469">
    <property type="entry name" value="GLUCOSE-6-PHOSPHATE ISOMERASE"/>
    <property type="match status" value="1"/>
</dbReference>
<dbReference type="PANTHER" id="PTHR11469:SF1">
    <property type="entry name" value="GLUCOSE-6-PHOSPHATE ISOMERASE"/>
    <property type="match status" value="1"/>
</dbReference>
<dbReference type="Pfam" id="PF00342">
    <property type="entry name" value="PGI"/>
    <property type="match status" value="1"/>
</dbReference>
<dbReference type="PRINTS" id="PR00662">
    <property type="entry name" value="G6PISOMERASE"/>
</dbReference>
<dbReference type="SUPFAM" id="SSF53697">
    <property type="entry name" value="SIS domain"/>
    <property type="match status" value="1"/>
</dbReference>
<dbReference type="PROSITE" id="PS00765">
    <property type="entry name" value="P_GLUCOSE_ISOMERASE_1"/>
    <property type="match status" value="1"/>
</dbReference>
<dbReference type="PROSITE" id="PS00174">
    <property type="entry name" value="P_GLUCOSE_ISOMERASE_2"/>
    <property type="match status" value="1"/>
</dbReference>
<dbReference type="PROSITE" id="PS51463">
    <property type="entry name" value="P_GLUCOSE_ISOMERASE_3"/>
    <property type="match status" value="1"/>
</dbReference>